<proteinExistence type="inferred from homology"/>
<sequence length="194" mass="21868">MKEWIVATKNKGKVAEFEAILGKRGFSVKSLLDYPAIEDIEETGSTFNENATIKAEAIAERFQRPVLADDSGLIIDALDGRPGIFSARYAGEEKDDQKNIEKVLRELQDIPWKARTARFHCSIALARPQAETIVFEGTCEGYITTEPKGTGGFGYDPIFYVPSHDKTMAELTQEEKNKLSHRYHALKQLDKWLD</sequence>
<protein>
    <recommendedName>
        <fullName evidence="1">dITP/XTP pyrophosphatase</fullName>
        <ecNumber evidence="1">3.6.1.66</ecNumber>
    </recommendedName>
    <alternativeName>
        <fullName evidence="1">Non-canonical purine NTP pyrophosphatase</fullName>
    </alternativeName>
    <alternativeName>
        <fullName evidence="1">Non-standard purine NTP pyrophosphatase</fullName>
    </alternativeName>
    <alternativeName>
        <fullName evidence="1">Nucleoside-triphosphate diphosphatase</fullName>
    </alternativeName>
    <alternativeName>
        <fullName evidence="1">Nucleoside-triphosphate pyrophosphatase</fullName>
        <shortName evidence="1">NTPase</shortName>
    </alternativeName>
</protein>
<evidence type="ECO:0000255" key="1">
    <source>
        <dbReference type="HAMAP-Rule" id="MF_01405"/>
    </source>
</evidence>
<gene>
    <name type="ordered locus">BH3067</name>
</gene>
<feature type="chain" id="PRO_0000178125" description="dITP/XTP pyrophosphatase">
    <location>
        <begin position="1"/>
        <end position="194"/>
    </location>
</feature>
<feature type="active site" description="Proton acceptor" evidence="1">
    <location>
        <position position="70"/>
    </location>
</feature>
<feature type="binding site" evidence="1">
    <location>
        <begin position="8"/>
        <end position="13"/>
    </location>
    <ligand>
        <name>substrate</name>
    </ligand>
</feature>
<feature type="binding site" evidence="1">
    <location>
        <position position="41"/>
    </location>
    <ligand>
        <name>Mg(2+)</name>
        <dbReference type="ChEBI" id="CHEBI:18420"/>
    </ligand>
</feature>
<feature type="binding site" evidence="1">
    <location>
        <position position="70"/>
    </location>
    <ligand>
        <name>Mg(2+)</name>
        <dbReference type="ChEBI" id="CHEBI:18420"/>
    </ligand>
</feature>
<feature type="binding site" evidence="1">
    <location>
        <position position="71"/>
    </location>
    <ligand>
        <name>substrate</name>
    </ligand>
</feature>
<feature type="binding site" evidence="1">
    <location>
        <begin position="153"/>
        <end position="156"/>
    </location>
    <ligand>
        <name>substrate</name>
    </ligand>
</feature>
<feature type="binding site" evidence="1">
    <location>
        <position position="176"/>
    </location>
    <ligand>
        <name>substrate</name>
    </ligand>
</feature>
<feature type="binding site" evidence="1">
    <location>
        <begin position="181"/>
        <end position="182"/>
    </location>
    <ligand>
        <name>substrate</name>
    </ligand>
</feature>
<accession>Q9K8D9</accession>
<dbReference type="EC" id="3.6.1.66" evidence="1"/>
<dbReference type="EMBL" id="BA000004">
    <property type="protein sequence ID" value="BAB06786.1"/>
    <property type="molecule type" value="Genomic_DNA"/>
</dbReference>
<dbReference type="PIR" id="C84033">
    <property type="entry name" value="C84033"/>
</dbReference>
<dbReference type="RefSeq" id="WP_010899211.1">
    <property type="nucleotide sequence ID" value="NC_002570.2"/>
</dbReference>
<dbReference type="SMR" id="Q9K8D9"/>
<dbReference type="STRING" id="272558.gene:10728979"/>
<dbReference type="GeneID" id="87598591"/>
<dbReference type="KEGG" id="bha:BH3067"/>
<dbReference type="eggNOG" id="COG0127">
    <property type="taxonomic scope" value="Bacteria"/>
</dbReference>
<dbReference type="HOGENOM" id="CLU_082080_0_2_9"/>
<dbReference type="OrthoDB" id="9807456at2"/>
<dbReference type="Proteomes" id="UP000001258">
    <property type="component" value="Chromosome"/>
</dbReference>
<dbReference type="GO" id="GO:0005829">
    <property type="term" value="C:cytosol"/>
    <property type="evidence" value="ECO:0007669"/>
    <property type="project" value="TreeGrafter"/>
</dbReference>
<dbReference type="GO" id="GO:0035870">
    <property type="term" value="F:dITP diphosphatase activity"/>
    <property type="evidence" value="ECO:0007669"/>
    <property type="project" value="RHEA"/>
</dbReference>
<dbReference type="GO" id="GO:0036220">
    <property type="term" value="F:ITP diphosphatase activity"/>
    <property type="evidence" value="ECO:0007669"/>
    <property type="project" value="UniProtKB-EC"/>
</dbReference>
<dbReference type="GO" id="GO:0046872">
    <property type="term" value="F:metal ion binding"/>
    <property type="evidence" value="ECO:0007669"/>
    <property type="project" value="UniProtKB-KW"/>
</dbReference>
<dbReference type="GO" id="GO:0000166">
    <property type="term" value="F:nucleotide binding"/>
    <property type="evidence" value="ECO:0007669"/>
    <property type="project" value="UniProtKB-KW"/>
</dbReference>
<dbReference type="GO" id="GO:0017111">
    <property type="term" value="F:ribonucleoside triphosphate phosphatase activity"/>
    <property type="evidence" value="ECO:0007669"/>
    <property type="project" value="InterPro"/>
</dbReference>
<dbReference type="GO" id="GO:0036222">
    <property type="term" value="F:XTP diphosphatase activity"/>
    <property type="evidence" value="ECO:0007669"/>
    <property type="project" value="RHEA"/>
</dbReference>
<dbReference type="GO" id="GO:0009117">
    <property type="term" value="P:nucleotide metabolic process"/>
    <property type="evidence" value="ECO:0007669"/>
    <property type="project" value="UniProtKB-KW"/>
</dbReference>
<dbReference type="GO" id="GO:0009146">
    <property type="term" value="P:purine nucleoside triphosphate catabolic process"/>
    <property type="evidence" value="ECO:0007669"/>
    <property type="project" value="UniProtKB-UniRule"/>
</dbReference>
<dbReference type="CDD" id="cd00515">
    <property type="entry name" value="HAM1"/>
    <property type="match status" value="1"/>
</dbReference>
<dbReference type="FunFam" id="3.90.950.10:FF:000001">
    <property type="entry name" value="dITP/XTP pyrophosphatase"/>
    <property type="match status" value="1"/>
</dbReference>
<dbReference type="Gene3D" id="3.90.950.10">
    <property type="match status" value="1"/>
</dbReference>
<dbReference type="HAMAP" id="MF_01405">
    <property type="entry name" value="Non_canon_purine_NTPase"/>
    <property type="match status" value="1"/>
</dbReference>
<dbReference type="InterPro" id="IPR020922">
    <property type="entry name" value="dITP/XTP_pyrophosphatase"/>
</dbReference>
<dbReference type="InterPro" id="IPR029001">
    <property type="entry name" value="ITPase-like_fam"/>
</dbReference>
<dbReference type="InterPro" id="IPR002637">
    <property type="entry name" value="RdgB/HAM1"/>
</dbReference>
<dbReference type="NCBIfam" id="NF011397">
    <property type="entry name" value="PRK14822.1"/>
    <property type="match status" value="1"/>
</dbReference>
<dbReference type="NCBIfam" id="TIGR00042">
    <property type="entry name" value="RdgB/HAM1 family non-canonical purine NTP pyrophosphatase"/>
    <property type="match status" value="1"/>
</dbReference>
<dbReference type="PANTHER" id="PTHR11067:SF9">
    <property type="entry name" value="INOSINE TRIPHOSPHATE PYROPHOSPHATASE"/>
    <property type="match status" value="1"/>
</dbReference>
<dbReference type="PANTHER" id="PTHR11067">
    <property type="entry name" value="INOSINE TRIPHOSPHATE PYROPHOSPHATASE/HAM1 PROTEIN"/>
    <property type="match status" value="1"/>
</dbReference>
<dbReference type="Pfam" id="PF01725">
    <property type="entry name" value="Ham1p_like"/>
    <property type="match status" value="1"/>
</dbReference>
<dbReference type="SUPFAM" id="SSF52972">
    <property type="entry name" value="ITPase-like"/>
    <property type="match status" value="1"/>
</dbReference>
<comment type="function">
    <text evidence="1">Pyrophosphatase that catalyzes the hydrolysis of nucleoside triphosphates to their monophosphate derivatives, with a high preference for the non-canonical purine nucleotides XTP (xanthosine triphosphate), dITP (deoxyinosine triphosphate) and ITP. Seems to function as a house-cleaning enzyme that removes non-canonical purine nucleotides from the nucleotide pool, thus preventing their incorporation into DNA/RNA and avoiding chromosomal lesions.</text>
</comment>
<comment type="catalytic activity">
    <reaction evidence="1">
        <text>XTP + H2O = XMP + diphosphate + H(+)</text>
        <dbReference type="Rhea" id="RHEA:28610"/>
        <dbReference type="ChEBI" id="CHEBI:15377"/>
        <dbReference type="ChEBI" id="CHEBI:15378"/>
        <dbReference type="ChEBI" id="CHEBI:33019"/>
        <dbReference type="ChEBI" id="CHEBI:57464"/>
        <dbReference type="ChEBI" id="CHEBI:61314"/>
        <dbReference type="EC" id="3.6.1.66"/>
    </reaction>
</comment>
<comment type="catalytic activity">
    <reaction evidence="1">
        <text>dITP + H2O = dIMP + diphosphate + H(+)</text>
        <dbReference type="Rhea" id="RHEA:28342"/>
        <dbReference type="ChEBI" id="CHEBI:15377"/>
        <dbReference type="ChEBI" id="CHEBI:15378"/>
        <dbReference type="ChEBI" id="CHEBI:33019"/>
        <dbReference type="ChEBI" id="CHEBI:61194"/>
        <dbReference type="ChEBI" id="CHEBI:61382"/>
        <dbReference type="EC" id="3.6.1.66"/>
    </reaction>
</comment>
<comment type="catalytic activity">
    <reaction evidence="1">
        <text>ITP + H2O = IMP + diphosphate + H(+)</text>
        <dbReference type="Rhea" id="RHEA:29399"/>
        <dbReference type="ChEBI" id="CHEBI:15377"/>
        <dbReference type="ChEBI" id="CHEBI:15378"/>
        <dbReference type="ChEBI" id="CHEBI:33019"/>
        <dbReference type="ChEBI" id="CHEBI:58053"/>
        <dbReference type="ChEBI" id="CHEBI:61402"/>
        <dbReference type="EC" id="3.6.1.66"/>
    </reaction>
</comment>
<comment type="cofactor">
    <cofactor evidence="1">
        <name>Mg(2+)</name>
        <dbReference type="ChEBI" id="CHEBI:18420"/>
    </cofactor>
    <text evidence="1">Binds 1 Mg(2+) ion per subunit.</text>
</comment>
<comment type="subunit">
    <text evidence="1">Homodimer.</text>
</comment>
<comment type="similarity">
    <text evidence="1">Belongs to the HAM1 NTPase family.</text>
</comment>
<reference key="1">
    <citation type="journal article" date="2000" name="Nucleic Acids Res.">
        <title>Complete genome sequence of the alkaliphilic bacterium Bacillus halodurans and genomic sequence comparison with Bacillus subtilis.</title>
        <authorList>
            <person name="Takami H."/>
            <person name="Nakasone K."/>
            <person name="Takaki Y."/>
            <person name="Maeno G."/>
            <person name="Sasaki R."/>
            <person name="Masui N."/>
            <person name="Fuji F."/>
            <person name="Hirama C."/>
            <person name="Nakamura Y."/>
            <person name="Ogasawara N."/>
            <person name="Kuhara S."/>
            <person name="Horikoshi K."/>
        </authorList>
    </citation>
    <scope>NUCLEOTIDE SEQUENCE [LARGE SCALE GENOMIC DNA]</scope>
    <source>
        <strain>ATCC BAA-125 / DSM 18197 / FERM 7344 / JCM 9153 / C-125</strain>
    </source>
</reference>
<keyword id="KW-0378">Hydrolase</keyword>
<keyword id="KW-0460">Magnesium</keyword>
<keyword id="KW-0479">Metal-binding</keyword>
<keyword id="KW-0546">Nucleotide metabolism</keyword>
<keyword id="KW-0547">Nucleotide-binding</keyword>
<keyword id="KW-1185">Reference proteome</keyword>
<organism>
    <name type="scientific">Halalkalibacterium halodurans (strain ATCC BAA-125 / DSM 18197 / FERM 7344 / JCM 9153 / C-125)</name>
    <name type="common">Bacillus halodurans</name>
    <dbReference type="NCBI Taxonomy" id="272558"/>
    <lineage>
        <taxon>Bacteria</taxon>
        <taxon>Bacillati</taxon>
        <taxon>Bacillota</taxon>
        <taxon>Bacilli</taxon>
        <taxon>Bacillales</taxon>
        <taxon>Bacillaceae</taxon>
        <taxon>Halalkalibacterium (ex Joshi et al. 2022)</taxon>
    </lineage>
</organism>
<name>IXTPA_HALH5</name>